<reference key="1">
    <citation type="journal article" date="2003" name="Nat. Genet.">
        <title>Comparative analysis of the genome sequences of Bordetella pertussis, Bordetella parapertussis and Bordetella bronchiseptica.</title>
        <authorList>
            <person name="Parkhill J."/>
            <person name="Sebaihia M."/>
            <person name="Preston A."/>
            <person name="Murphy L.D."/>
            <person name="Thomson N.R."/>
            <person name="Harris D.E."/>
            <person name="Holden M.T.G."/>
            <person name="Churcher C.M."/>
            <person name="Bentley S.D."/>
            <person name="Mungall K.L."/>
            <person name="Cerdeno-Tarraga A.-M."/>
            <person name="Temple L."/>
            <person name="James K.D."/>
            <person name="Harris B."/>
            <person name="Quail M.A."/>
            <person name="Achtman M."/>
            <person name="Atkin R."/>
            <person name="Baker S."/>
            <person name="Basham D."/>
            <person name="Bason N."/>
            <person name="Cherevach I."/>
            <person name="Chillingworth T."/>
            <person name="Collins M."/>
            <person name="Cronin A."/>
            <person name="Davis P."/>
            <person name="Doggett J."/>
            <person name="Feltwell T."/>
            <person name="Goble A."/>
            <person name="Hamlin N."/>
            <person name="Hauser H."/>
            <person name="Holroyd S."/>
            <person name="Jagels K."/>
            <person name="Leather S."/>
            <person name="Moule S."/>
            <person name="Norberczak H."/>
            <person name="O'Neil S."/>
            <person name="Ormond D."/>
            <person name="Price C."/>
            <person name="Rabbinowitsch E."/>
            <person name="Rutter S."/>
            <person name="Sanders M."/>
            <person name="Saunders D."/>
            <person name="Seeger K."/>
            <person name="Sharp S."/>
            <person name="Simmonds M."/>
            <person name="Skelton J."/>
            <person name="Squares R."/>
            <person name="Squares S."/>
            <person name="Stevens K."/>
            <person name="Unwin L."/>
            <person name="Whitehead S."/>
            <person name="Barrell B.G."/>
            <person name="Maskell D.J."/>
        </authorList>
    </citation>
    <scope>NUCLEOTIDE SEQUENCE [LARGE SCALE GENOMIC DNA]</scope>
    <source>
        <strain>ATCC BAA-588 / NCTC 13252 / RB50</strain>
    </source>
</reference>
<gene>
    <name evidence="1" type="primary">rplW</name>
    <name type="ordered locus">BB0031</name>
</gene>
<keyword id="KW-0687">Ribonucleoprotein</keyword>
<keyword id="KW-0689">Ribosomal protein</keyword>
<keyword id="KW-0694">RNA-binding</keyword>
<keyword id="KW-0699">rRNA-binding</keyword>
<protein>
    <recommendedName>
        <fullName evidence="1">Large ribosomal subunit protein uL23</fullName>
    </recommendedName>
    <alternativeName>
        <fullName evidence="2">50S ribosomal protein L23</fullName>
    </alternativeName>
</protein>
<accession>Q7WRC3</accession>
<sequence>MNAERLMQVILAPIVTEKATFVAEKNQQVAFRVVADATKPEIKAAVELLFKVQVESVQVLNRKGKVKRFGRFVGRRRNERKAYVALKDGQEIDFAEVK</sequence>
<name>RL23_BORBR</name>
<organism>
    <name type="scientific">Bordetella bronchiseptica (strain ATCC BAA-588 / NCTC 13252 / RB50)</name>
    <name type="common">Alcaligenes bronchisepticus</name>
    <dbReference type="NCBI Taxonomy" id="257310"/>
    <lineage>
        <taxon>Bacteria</taxon>
        <taxon>Pseudomonadati</taxon>
        <taxon>Pseudomonadota</taxon>
        <taxon>Betaproteobacteria</taxon>
        <taxon>Burkholderiales</taxon>
        <taxon>Alcaligenaceae</taxon>
        <taxon>Bordetella</taxon>
    </lineage>
</organism>
<dbReference type="EMBL" id="BX640437">
    <property type="protein sequence ID" value="CAE30533.1"/>
    <property type="molecule type" value="Genomic_DNA"/>
</dbReference>
<dbReference type="RefSeq" id="WP_003806906.1">
    <property type="nucleotide sequence ID" value="NC_002927.3"/>
</dbReference>
<dbReference type="SMR" id="Q7WRC3"/>
<dbReference type="GeneID" id="93206260"/>
<dbReference type="KEGG" id="bbr:BB0031"/>
<dbReference type="eggNOG" id="COG0089">
    <property type="taxonomic scope" value="Bacteria"/>
</dbReference>
<dbReference type="HOGENOM" id="CLU_037562_3_1_4"/>
<dbReference type="Proteomes" id="UP000001027">
    <property type="component" value="Chromosome"/>
</dbReference>
<dbReference type="GO" id="GO:1990904">
    <property type="term" value="C:ribonucleoprotein complex"/>
    <property type="evidence" value="ECO:0007669"/>
    <property type="project" value="UniProtKB-KW"/>
</dbReference>
<dbReference type="GO" id="GO:0005840">
    <property type="term" value="C:ribosome"/>
    <property type="evidence" value="ECO:0007669"/>
    <property type="project" value="UniProtKB-KW"/>
</dbReference>
<dbReference type="GO" id="GO:0019843">
    <property type="term" value="F:rRNA binding"/>
    <property type="evidence" value="ECO:0007669"/>
    <property type="project" value="UniProtKB-UniRule"/>
</dbReference>
<dbReference type="GO" id="GO:0003735">
    <property type="term" value="F:structural constituent of ribosome"/>
    <property type="evidence" value="ECO:0007669"/>
    <property type="project" value="InterPro"/>
</dbReference>
<dbReference type="GO" id="GO:0006412">
    <property type="term" value="P:translation"/>
    <property type="evidence" value="ECO:0007669"/>
    <property type="project" value="UniProtKB-UniRule"/>
</dbReference>
<dbReference type="FunFam" id="3.30.70.330:FF:000001">
    <property type="entry name" value="50S ribosomal protein L23"/>
    <property type="match status" value="1"/>
</dbReference>
<dbReference type="Gene3D" id="3.30.70.330">
    <property type="match status" value="1"/>
</dbReference>
<dbReference type="HAMAP" id="MF_01369_B">
    <property type="entry name" value="Ribosomal_uL23_B"/>
    <property type="match status" value="1"/>
</dbReference>
<dbReference type="InterPro" id="IPR012677">
    <property type="entry name" value="Nucleotide-bd_a/b_plait_sf"/>
</dbReference>
<dbReference type="InterPro" id="IPR013025">
    <property type="entry name" value="Ribosomal_uL23-like"/>
</dbReference>
<dbReference type="InterPro" id="IPR012678">
    <property type="entry name" value="Ribosomal_uL23/eL15/eS24_sf"/>
</dbReference>
<dbReference type="NCBIfam" id="NF004359">
    <property type="entry name" value="PRK05738.1-3"/>
    <property type="match status" value="1"/>
</dbReference>
<dbReference type="NCBIfam" id="NF004363">
    <property type="entry name" value="PRK05738.2-4"/>
    <property type="match status" value="1"/>
</dbReference>
<dbReference type="PANTHER" id="PTHR11620">
    <property type="entry name" value="60S RIBOSOMAL PROTEIN L23A"/>
    <property type="match status" value="1"/>
</dbReference>
<dbReference type="Pfam" id="PF00276">
    <property type="entry name" value="Ribosomal_L23"/>
    <property type="match status" value="1"/>
</dbReference>
<dbReference type="SUPFAM" id="SSF54189">
    <property type="entry name" value="Ribosomal proteins S24e, L23 and L15e"/>
    <property type="match status" value="1"/>
</dbReference>
<comment type="function">
    <text evidence="1">One of the early assembly proteins it binds 23S rRNA. One of the proteins that surrounds the polypeptide exit tunnel on the outside of the ribosome. Forms the main docking site for trigger factor binding to the ribosome.</text>
</comment>
<comment type="subunit">
    <text evidence="1">Part of the 50S ribosomal subunit. Contacts protein L29, and trigger factor when it is bound to the ribosome.</text>
</comment>
<comment type="similarity">
    <text evidence="1">Belongs to the universal ribosomal protein uL23 family.</text>
</comment>
<evidence type="ECO:0000255" key="1">
    <source>
        <dbReference type="HAMAP-Rule" id="MF_01369"/>
    </source>
</evidence>
<evidence type="ECO:0000305" key="2"/>
<feature type="chain" id="PRO_0000272711" description="Large ribosomal subunit protein uL23">
    <location>
        <begin position="1"/>
        <end position="98"/>
    </location>
</feature>
<proteinExistence type="inferred from homology"/>